<protein>
    <recommendedName>
        <fullName evidence="1">Light-independent protochlorophyllide reductase subunit N</fullName>
        <shortName evidence="1">DPOR subunit N</shortName>
        <shortName evidence="1">LI-POR subunit N</shortName>
        <ecNumber evidence="1">1.3.7.7</ecNumber>
    </recommendedName>
</protein>
<reference key="1">
    <citation type="submission" date="2003-02" db="EMBL/GenBank/DDBJ databases">
        <title>Complete nucleotide sequence of Pinus koraiensis.</title>
        <authorList>
            <person name="Noh E.W."/>
            <person name="Lee J.S."/>
            <person name="Choi Y.I."/>
            <person name="Han M.S."/>
            <person name="Yi Y.S."/>
            <person name="Han S.U."/>
        </authorList>
    </citation>
    <scope>NUCLEOTIDE SEQUENCE [LARGE SCALE GENOMIC DNA]</scope>
    <source>
        <strain>KangWon16</strain>
    </source>
</reference>
<geneLocation type="chloroplast"/>
<keyword id="KW-0004">4Fe-4S</keyword>
<keyword id="KW-0067">ATP-binding</keyword>
<keyword id="KW-0149">Chlorophyll biosynthesis</keyword>
<keyword id="KW-0150">Chloroplast</keyword>
<keyword id="KW-0408">Iron</keyword>
<keyword id="KW-0411">Iron-sulfur</keyword>
<keyword id="KW-0479">Metal-binding</keyword>
<keyword id="KW-0547">Nucleotide-binding</keyword>
<keyword id="KW-0560">Oxidoreductase</keyword>
<keyword id="KW-0602">Photosynthesis</keyword>
<keyword id="KW-0934">Plastid</keyword>
<gene>
    <name evidence="1" type="primary">chlN</name>
</gene>
<comment type="function">
    <text evidence="1">Component of the dark-operative protochlorophyllide reductase (DPOR) that uses Mg-ATP and reduced ferredoxin to reduce ring D of protochlorophyllide (Pchlide) to form chlorophyllide a (Chlide). This reaction is light-independent. The NB-protein (ChlN-ChlB) is the catalytic component of the complex.</text>
</comment>
<comment type="catalytic activity">
    <reaction evidence="1">
        <text>chlorophyllide a + oxidized 2[4Fe-4S]-[ferredoxin] + 2 ADP + 2 phosphate = protochlorophyllide a + reduced 2[4Fe-4S]-[ferredoxin] + 2 ATP + 2 H2O</text>
        <dbReference type="Rhea" id="RHEA:28202"/>
        <dbReference type="Rhea" id="RHEA-COMP:10002"/>
        <dbReference type="Rhea" id="RHEA-COMP:10004"/>
        <dbReference type="ChEBI" id="CHEBI:15377"/>
        <dbReference type="ChEBI" id="CHEBI:30616"/>
        <dbReference type="ChEBI" id="CHEBI:33722"/>
        <dbReference type="ChEBI" id="CHEBI:33723"/>
        <dbReference type="ChEBI" id="CHEBI:43474"/>
        <dbReference type="ChEBI" id="CHEBI:83348"/>
        <dbReference type="ChEBI" id="CHEBI:83350"/>
        <dbReference type="ChEBI" id="CHEBI:456216"/>
        <dbReference type="EC" id="1.3.7.7"/>
    </reaction>
</comment>
<comment type="cofactor">
    <cofactor evidence="1">
        <name>[4Fe-4S] cluster</name>
        <dbReference type="ChEBI" id="CHEBI:49883"/>
    </cofactor>
    <text evidence="1">Binds 1 [4Fe-4S] cluster per heterodimer. The cluster is bound at the heterodimer interface by residues from both subunits.</text>
</comment>
<comment type="pathway">
    <text evidence="1">Porphyrin-containing compound metabolism; chlorophyll biosynthesis (light-independent).</text>
</comment>
<comment type="subunit">
    <text evidence="1">Protochlorophyllide reductase is composed of three subunits; ChlL, ChlN and ChlB. Forms a heterotetramer of two ChlB and two ChlN subunits.</text>
</comment>
<comment type="subcellular location">
    <subcellularLocation>
        <location>Plastid</location>
        <location>Chloroplast</location>
    </subcellularLocation>
</comment>
<comment type="similarity">
    <text evidence="1">Belongs to the BchN/ChlN family.</text>
</comment>
<proteinExistence type="inferred from homology"/>
<dbReference type="EC" id="1.3.7.7" evidence="1"/>
<dbReference type="EMBL" id="AY228468">
    <property type="protein sequence ID" value="AAO74124.1"/>
    <property type="molecule type" value="Genomic_DNA"/>
</dbReference>
<dbReference type="RefSeq" id="NP_817276.1">
    <property type="nucleotide sequence ID" value="NC_004677.2"/>
</dbReference>
<dbReference type="SMR" id="Q85WU5"/>
<dbReference type="GeneID" id="806976"/>
<dbReference type="UniPathway" id="UPA00670"/>
<dbReference type="GO" id="GO:0009507">
    <property type="term" value="C:chloroplast"/>
    <property type="evidence" value="ECO:0007669"/>
    <property type="project" value="UniProtKB-SubCell"/>
</dbReference>
<dbReference type="GO" id="GO:0051539">
    <property type="term" value="F:4 iron, 4 sulfur cluster binding"/>
    <property type="evidence" value="ECO:0007669"/>
    <property type="project" value="UniProtKB-UniRule"/>
</dbReference>
<dbReference type="GO" id="GO:0005524">
    <property type="term" value="F:ATP binding"/>
    <property type="evidence" value="ECO:0007669"/>
    <property type="project" value="UniProtKB-UniRule"/>
</dbReference>
<dbReference type="GO" id="GO:0046872">
    <property type="term" value="F:metal ion binding"/>
    <property type="evidence" value="ECO:0007669"/>
    <property type="project" value="UniProtKB-KW"/>
</dbReference>
<dbReference type="GO" id="GO:0016730">
    <property type="term" value="F:oxidoreductase activity, acting on iron-sulfur proteins as donors"/>
    <property type="evidence" value="ECO:0007669"/>
    <property type="project" value="InterPro"/>
</dbReference>
<dbReference type="GO" id="GO:0016636">
    <property type="term" value="F:oxidoreductase activity, acting on the CH-CH group of donors, iron-sulfur protein as acceptor"/>
    <property type="evidence" value="ECO:0007669"/>
    <property type="project" value="UniProtKB-UniRule"/>
</dbReference>
<dbReference type="GO" id="GO:0036068">
    <property type="term" value="P:light-independent chlorophyll biosynthetic process"/>
    <property type="evidence" value="ECO:0007669"/>
    <property type="project" value="UniProtKB-UniRule"/>
</dbReference>
<dbReference type="GO" id="GO:0019685">
    <property type="term" value="P:photosynthesis, dark reaction"/>
    <property type="evidence" value="ECO:0007669"/>
    <property type="project" value="InterPro"/>
</dbReference>
<dbReference type="CDD" id="cd01979">
    <property type="entry name" value="Pchlide_reductase_N"/>
    <property type="match status" value="1"/>
</dbReference>
<dbReference type="Gene3D" id="3.40.50.1980">
    <property type="entry name" value="Nitrogenase molybdenum iron protein domain"/>
    <property type="match status" value="3"/>
</dbReference>
<dbReference type="HAMAP" id="MF_00352">
    <property type="entry name" value="ChlN_BchN"/>
    <property type="match status" value="1"/>
</dbReference>
<dbReference type="InterPro" id="IPR050293">
    <property type="entry name" value="LIPOR_BchN/ChlN"/>
</dbReference>
<dbReference type="InterPro" id="IPR000510">
    <property type="entry name" value="Nase/OxRdtase_comp1"/>
</dbReference>
<dbReference type="InterPro" id="IPR005970">
    <property type="entry name" value="Protochl_reductN"/>
</dbReference>
<dbReference type="NCBIfam" id="TIGR01279">
    <property type="entry name" value="DPOR_bchN"/>
    <property type="match status" value="1"/>
</dbReference>
<dbReference type="NCBIfam" id="NF002768">
    <property type="entry name" value="PRK02842.1"/>
    <property type="match status" value="1"/>
</dbReference>
<dbReference type="PANTHER" id="PTHR39429">
    <property type="entry name" value="LIGHT-INDEPENDENT PROTOCHLOROPHYLLIDE REDUCTASE SUBUNIT N"/>
    <property type="match status" value="1"/>
</dbReference>
<dbReference type="PANTHER" id="PTHR39429:SF3">
    <property type="entry name" value="LIGHT-INDEPENDENT PROTOCHLOROPHYLLIDE REDUCTASE SUBUNIT N"/>
    <property type="match status" value="1"/>
</dbReference>
<dbReference type="Pfam" id="PF00148">
    <property type="entry name" value="Oxidored_nitro"/>
    <property type="match status" value="1"/>
</dbReference>
<dbReference type="PIRSF" id="PIRSF000162">
    <property type="entry name" value="P_chlorophyll_rd"/>
    <property type="match status" value="1"/>
</dbReference>
<dbReference type="SUPFAM" id="SSF53807">
    <property type="entry name" value="Helical backbone' metal receptor"/>
    <property type="match status" value="1"/>
</dbReference>
<sequence>MSTKIDETITFECETGNYHTFCPISCVSWLYQKIEDSFFLVVGTKTCGYFLQNALGVMIFAEPRYAMAELEEGDISAHLNDYEELKTLCIRIRKDRDPSVIIWIGTCTTEIIKMDLEGMAPKLEYEIGVPILVARANGLDYAFTQGEDTVLAVMAHRCPEQEFPIGESKETKTKTKLFPFPLLKEKKLVEYANHPPLVIFGSLPSNLVSQLDTELRRQFIKVSGWLPAQRYADLPSLGDGVYVCGVNPFLSRTATTLIRRKKCELIVAPFPIGPDGTRAWIERICPVFGIEAQSLEEREERIWESLKDYLDLVRGKSVFFMGDNLLEISLARFLIRCGMIVYEIGIPYMDKRYQAAELALLKDTCIRMCIPIPRIVEKPDNSNQIRRMRELQPDLAITGMAHANPLGARGIGTKWSVEFTFAQIHGFANARDVLELVTRPLRRNENLDNLDRTTLVRNNNEFYTSTPTPR</sequence>
<feature type="chain" id="PRO_0000208619" description="Light-independent protochlorophyllide reductase subunit N">
    <location>
        <begin position="1"/>
        <end position="470"/>
    </location>
</feature>
<feature type="binding site" evidence="1">
    <location>
        <position position="22"/>
    </location>
    <ligand>
        <name>[4Fe-4S] cluster</name>
        <dbReference type="ChEBI" id="CHEBI:49883"/>
        <note>ligand shared with heterodimeric partner</note>
    </ligand>
</feature>
<feature type="binding site" evidence="1">
    <location>
        <position position="47"/>
    </location>
    <ligand>
        <name>[4Fe-4S] cluster</name>
        <dbReference type="ChEBI" id="CHEBI:49883"/>
        <note>ligand shared with heterodimeric partner</note>
    </ligand>
</feature>
<feature type="binding site" evidence="1">
    <location>
        <position position="107"/>
    </location>
    <ligand>
        <name>[4Fe-4S] cluster</name>
        <dbReference type="ChEBI" id="CHEBI:49883"/>
        <note>ligand shared with heterodimeric partner</note>
    </ligand>
</feature>
<name>CHLN_PINKO</name>
<organism>
    <name type="scientific">Pinus koraiensis</name>
    <name type="common">Korean pine</name>
    <dbReference type="NCBI Taxonomy" id="88728"/>
    <lineage>
        <taxon>Eukaryota</taxon>
        <taxon>Viridiplantae</taxon>
        <taxon>Streptophyta</taxon>
        <taxon>Embryophyta</taxon>
        <taxon>Tracheophyta</taxon>
        <taxon>Spermatophyta</taxon>
        <taxon>Pinopsida</taxon>
        <taxon>Pinidae</taxon>
        <taxon>Conifers I</taxon>
        <taxon>Pinales</taxon>
        <taxon>Pinaceae</taxon>
        <taxon>Pinus</taxon>
        <taxon>Pinus subgen. Strobus</taxon>
    </lineage>
</organism>
<accession>Q85WU5</accession>
<evidence type="ECO:0000255" key="1">
    <source>
        <dbReference type="HAMAP-Rule" id="MF_00352"/>
    </source>
</evidence>